<sequence length="146" mass="16037">MVKKVLLINGPNLNLLGTREPEKYGTTSLKDIEQAGRDQADSKKDGSELQVFQSNTEGFIVDRIHKAKQDGVGFIVINAGAYTHTSVAIRDALLGTAIPFIEVHITNVHQREPFRHQSYLSDKAVAVVCGLGVYGYTASIEYALNY</sequence>
<proteinExistence type="inferred from homology"/>
<feature type="chain" id="PRO_0000402374" description="Catabolic 3-dehydroquinase">
    <location>
        <begin position="1"/>
        <end position="146"/>
    </location>
</feature>
<feature type="active site" description="Proton acceptor" evidence="1">
    <location>
        <position position="24"/>
    </location>
</feature>
<feature type="active site" description="Proton donor" evidence="1">
    <location>
        <position position="104"/>
    </location>
</feature>
<feature type="binding site" evidence="1">
    <location>
        <position position="78"/>
    </location>
    <ligand>
        <name>substrate</name>
    </ligand>
</feature>
<feature type="binding site" evidence="1">
    <location>
        <position position="84"/>
    </location>
    <ligand>
        <name>substrate</name>
    </ligand>
</feature>
<feature type="binding site" evidence="1">
    <location>
        <position position="91"/>
    </location>
    <ligand>
        <name>substrate</name>
    </ligand>
</feature>
<feature type="binding site" evidence="1">
    <location>
        <begin position="105"/>
        <end position="106"/>
    </location>
    <ligand>
        <name>substrate</name>
    </ligand>
</feature>
<feature type="binding site" evidence="1">
    <location>
        <position position="115"/>
    </location>
    <ligand>
        <name>substrate</name>
    </ligand>
</feature>
<feature type="site" description="Transition state stabilizer" evidence="1">
    <location>
        <position position="19"/>
    </location>
</feature>
<organism>
    <name type="scientific">Meyerozyma guilliermondii (strain ATCC 6260 / CBS 566 / DSM 6381 / JCM 1539 / NBRC 10279 / NRRL Y-324)</name>
    <name type="common">Yeast</name>
    <name type="synonym">Candida guilliermondii</name>
    <dbReference type="NCBI Taxonomy" id="294746"/>
    <lineage>
        <taxon>Eukaryota</taxon>
        <taxon>Fungi</taxon>
        <taxon>Dikarya</taxon>
        <taxon>Ascomycota</taxon>
        <taxon>Saccharomycotina</taxon>
        <taxon>Pichiomycetes</taxon>
        <taxon>Debaryomycetaceae</taxon>
        <taxon>Meyerozyma</taxon>
    </lineage>
</organism>
<protein>
    <recommendedName>
        <fullName evidence="1">Catabolic 3-dehydroquinase</fullName>
        <shortName evidence="1">cDHQase</shortName>
        <ecNumber evidence="1">4.2.1.10</ecNumber>
    </recommendedName>
    <alternativeName>
        <fullName evidence="1">3-dehydroquinate dehydratase</fullName>
    </alternativeName>
</protein>
<reference key="1">
    <citation type="journal article" date="2009" name="Nature">
        <title>Evolution of pathogenicity and sexual reproduction in eight Candida genomes.</title>
        <authorList>
            <person name="Butler G."/>
            <person name="Rasmussen M.D."/>
            <person name="Lin M.F."/>
            <person name="Santos M.A.S."/>
            <person name="Sakthikumar S."/>
            <person name="Munro C.A."/>
            <person name="Rheinbay E."/>
            <person name="Grabherr M."/>
            <person name="Forche A."/>
            <person name="Reedy J.L."/>
            <person name="Agrafioti I."/>
            <person name="Arnaud M.B."/>
            <person name="Bates S."/>
            <person name="Brown A.J.P."/>
            <person name="Brunke S."/>
            <person name="Costanzo M.C."/>
            <person name="Fitzpatrick D.A."/>
            <person name="de Groot P.W.J."/>
            <person name="Harris D."/>
            <person name="Hoyer L.L."/>
            <person name="Hube B."/>
            <person name="Klis F.M."/>
            <person name="Kodira C."/>
            <person name="Lennard N."/>
            <person name="Logue M.E."/>
            <person name="Martin R."/>
            <person name="Neiman A.M."/>
            <person name="Nikolaou E."/>
            <person name="Quail M.A."/>
            <person name="Quinn J."/>
            <person name="Santos M.C."/>
            <person name="Schmitzberger F.F."/>
            <person name="Sherlock G."/>
            <person name="Shah P."/>
            <person name="Silverstein K.A.T."/>
            <person name="Skrzypek M.S."/>
            <person name="Soll D."/>
            <person name="Staggs R."/>
            <person name="Stansfield I."/>
            <person name="Stumpf M.P.H."/>
            <person name="Sudbery P.E."/>
            <person name="Srikantha T."/>
            <person name="Zeng Q."/>
            <person name="Berman J."/>
            <person name="Berriman M."/>
            <person name="Heitman J."/>
            <person name="Gow N.A.R."/>
            <person name="Lorenz M.C."/>
            <person name="Birren B.W."/>
            <person name="Kellis M."/>
            <person name="Cuomo C.A."/>
        </authorList>
    </citation>
    <scope>NUCLEOTIDE SEQUENCE [LARGE SCALE GENOMIC DNA]</scope>
    <source>
        <strain>ATCC 6260 / CBS 566 / DSM 6381 / JCM 1539 / NBRC 10279 / NRRL Y-324</strain>
    </source>
</reference>
<evidence type="ECO:0000255" key="1">
    <source>
        <dbReference type="HAMAP-Rule" id="MF_03136"/>
    </source>
</evidence>
<gene>
    <name evidence="1" type="primary">DQD1</name>
    <name type="ORF">PGUG_00441</name>
</gene>
<keyword id="KW-0456">Lyase</keyword>
<keyword id="KW-0672">Quinate metabolism</keyword>
<keyword id="KW-1185">Reference proteome</keyword>
<accession>A5DAY6</accession>
<name>3DHQ_PICGU</name>
<dbReference type="EC" id="4.2.1.10" evidence="1"/>
<dbReference type="EMBL" id="CH408155">
    <property type="protein sequence ID" value="EDK36343.2"/>
    <property type="molecule type" value="Genomic_DNA"/>
</dbReference>
<dbReference type="RefSeq" id="XP_001487064.1">
    <property type="nucleotide sequence ID" value="XM_001487014.1"/>
</dbReference>
<dbReference type="SMR" id="A5DAY6"/>
<dbReference type="STRING" id="294746.A5DAY6"/>
<dbReference type="GeneID" id="5128577"/>
<dbReference type="KEGG" id="pgu:PGUG_00441"/>
<dbReference type="VEuPathDB" id="FungiDB:PGUG_00441"/>
<dbReference type="eggNOG" id="ENOG502S1A9">
    <property type="taxonomic scope" value="Eukaryota"/>
</dbReference>
<dbReference type="HOGENOM" id="CLU_090968_1_0_1"/>
<dbReference type="InParanoid" id="A5DAY6"/>
<dbReference type="OMA" id="WIHEAGR"/>
<dbReference type="OrthoDB" id="8191625at2759"/>
<dbReference type="UniPathway" id="UPA00088">
    <property type="reaction ID" value="UER00178"/>
</dbReference>
<dbReference type="Proteomes" id="UP000001997">
    <property type="component" value="Unassembled WGS sequence"/>
</dbReference>
<dbReference type="GO" id="GO:0003855">
    <property type="term" value="F:3-dehydroquinate dehydratase activity"/>
    <property type="evidence" value="ECO:0007669"/>
    <property type="project" value="UniProtKB-UniRule"/>
</dbReference>
<dbReference type="GO" id="GO:0046279">
    <property type="term" value="P:3,4-dihydroxybenzoate biosynthetic process"/>
    <property type="evidence" value="ECO:0007669"/>
    <property type="project" value="UniProtKB-UniRule"/>
</dbReference>
<dbReference type="GO" id="GO:0019631">
    <property type="term" value="P:quinate catabolic process"/>
    <property type="evidence" value="ECO:0007669"/>
    <property type="project" value="TreeGrafter"/>
</dbReference>
<dbReference type="CDD" id="cd00466">
    <property type="entry name" value="DHQase_II"/>
    <property type="match status" value="1"/>
</dbReference>
<dbReference type="Gene3D" id="3.40.50.9100">
    <property type="entry name" value="Dehydroquinase, class II"/>
    <property type="match status" value="1"/>
</dbReference>
<dbReference type="HAMAP" id="MF_00169">
    <property type="entry name" value="AroQ"/>
    <property type="match status" value="1"/>
</dbReference>
<dbReference type="InterPro" id="IPR001874">
    <property type="entry name" value="DHquinase_II"/>
</dbReference>
<dbReference type="InterPro" id="IPR018509">
    <property type="entry name" value="DHquinase_II_CS"/>
</dbReference>
<dbReference type="InterPro" id="IPR036441">
    <property type="entry name" value="DHquinase_II_sf"/>
</dbReference>
<dbReference type="NCBIfam" id="TIGR01088">
    <property type="entry name" value="aroQ"/>
    <property type="match status" value="1"/>
</dbReference>
<dbReference type="NCBIfam" id="NF003804">
    <property type="entry name" value="PRK05395.1-1"/>
    <property type="match status" value="1"/>
</dbReference>
<dbReference type="NCBIfam" id="NF003805">
    <property type="entry name" value="PRK05395.1-2"/>
    <property type="match status" value="1"/>
</dbReference>
<dbReference type="NCBIfam" id="NF003806">
    <property type="entry name" value="PRK05395.1-3"/>
    <property type="match status" value="1"/>
</dbReference>
<dbReference type="NCBIfam" id="NF003807">
    <property type="entry name" value="PRK05395.1-4"/>
    <property type="match status" value="1"/>
</dbReference>
<dbReference type="PANTHER" id="PTHR21272">
    <property type="entry name" value="CATABOLIC 3-DEHYDROQUINASE"/>
    <property type="match status" value="1"/>
</dbReference>
<dbReference type="PANTHER" id="PTHR21272:SF3">
    <property type="entry name" value="CATABOLIC 3-DEHYDROQUINASE"/>
    <property type="match status" value="1"/>
</dbReference>
<dbReference type="Pfam" id="PF01220">
    <property type="entry name" value="DHquinase_II"/>
    <property type="match status" value="1"/>
</dbReference>
<dbReference type="PIRSF" id="PIRSF001399">
    <property type="entry name" value="DHquinase_II"/>
    <property type="match status" value="1"/>
</dbReference>
<dbReference type="SUPFAM" id="SSF52304">
    <property type="entry name" value="Type II 3-dehydroquinate dehydratase"/>
    <property type="match status" value="1"/>
</dbReference>
<dbReference type="PROSITE" id="PS01029">
    <property type="entry name" value="DEHYDROQUINASE_II"/>
    <property type="match status" value="1"/>
</dbReference>
<comment type="function">
    <text evidence="1">Is involved in the catabolism of quinate. Allows the utilization of quinate as carbon source via the beta-ketoadipate pathway.</text>
</comment>
<comment type="catalytic activity">
    <reaction evidence="1">
        <text>3-dehydroquinate = 3-dehydroshikimate + H2O</text>
        <dbReference type="Rhea" id="RHEA:21096"/>
        <dbReference type="ChEBI" id="CHEBI:15377"/>
        <dbReference type="ChEBI" id="CHEBI:16630"/>
        <dbReference type="ChEBI" id="CHEBI:32364"/>
        <dbReference type="EC" id="4.2.1.10"/>
    </reaction>
</comment>
<comment type="pathway">
    <text evidence="1">Aromatic compound metabolism; 3,4-dihydroxybenzoate biosynthesis; 3,4-dihydroxybenzoate from 3-dehydroquinate: step 1/2.</text>
</comment>
<comment type="subunit">
    <text evidence="1">Homododecamer. Adopts a ring-like structure, composed of an arrangement of two hexameric rings stacked on top of one another.</text>
</comment>
<comment type="similarity">
    <text evidence="1">Belongs to the type-II 3-dehydroquinase family.</text>
</comment>